<proteinExistence type="inferred from homology"/>
<protein>
    <recommendedName>
        <fullName evidence="1">DNA ligase</fullName>
        <ecNumber evidence="1">6.5.1.2</ecNumber>
    </recommendedName>
    <alternativeName>
        <fullName evidence="1">Polydeoxyribonucleotide synthase [NAD(+)]</fullName>
    </alternativeName>
</protein>
<dbReference type="EC" id="6.5.1.2" evidence="1"/>
<dbReference type="EMBL" id="CP001184">
    <property type="protein sequence ID" value="ACI59935.1"/>
    <property type="molecule type" value="Genomic_DNA"/>
</dbReference>
<dbReference type="RefSeq" id="WP_004026162.1">
    <property type="nucleotide sequence ID" value="NC_011374.1"/>
</dbReference>
<dbReference type="SMR" id="B5ZAV3"/>
<dbReference type="STRING" id="565575.UUR10_0136"/>
<dbReference type="GeneID" id="93848620"/>
<dbReference type="KEGG" id="uue:UUR10_0136"/>
<dbReference type="eggNOG" id="COG0272">
    <property type="taxonomic scope" value="Bacteria"/>
</dbReference>
<dbReference type="HOGENOM" id="CLU_007764_2_1_14"/>
<dbReference type="OrthoDB" id="9759736at2"/>
<dbReference type="Proteomes" id="UP000002018">
    <property type="component" value="Chromosome"/>
</dbReference>
<dbReference type="GO" id="GO:0005829">
    <property type="term" value="C:cytosol"/>
    <property type="evidence" value="ECO:0007669"/>
    <property type="project" value="TreeGrafter"/>
</dbReference>
<dbReference type="GO" id="GO:0003911">
    <property type="term" value="F:DNA ligase (NAD+) activity"/>
    <property type="evidence" value="ECO:0007669"/>
    <property type="project" value="UniProtKB-UniRule"/>
</dbReference>
<dbReference type="GO" id="GO:0046872">
    <property type="term" value="F:metal ion binding"/>
    <property type="evidence" value="ECO:0007669"/>
    <property type="project" value="UniProtKB-KW"/>
</dbReference>
<dbReference type="GO" id="GO:0006281">
    <property type="term" value="P:DNA repair"/>
    <property type="evidence" value="ECO:0007669"/>
    <property type="project" value="UniProtKB-KW"/>
</dbReference>
<dbReference type="GO" id="GO:0006260">
    <property type="term" value="P:DNA replication"/>
    <property type="evidence" value="ECO:0007669"/>
    <property type="project" value="UniProtKB-KW"/>
</dbReference>
<dbReference type="CDD" id="cd17748">
    <property type="entry name" value="BRCT_DNA_ligase_like"/>
    <property type="match status" value="1"/>
</dbReference>
<dbReference type="CDD" id="cd00114">
    <property type="entry name" value="LIGANc"/>
    <property type="match status" value="1"/>
</dbReference>
<dbReference type="FunFam" id="1.10.287.610:FF:000002">
    <property type="entry name" value="DNA ligase"/>
    <property type="match status" value="1"/>
</dbReference>
<dbReference type="Gene3D" id="6.20.10.30">
    <property type="match status" value="1"/>
</dbReference>
<dbReference type="Gene3D" id="1.10.150.20">
    <property type="entry name" value="5' to 3' exonuclease, C-terminal subdomain"/>
    <property type="match status" value="2"/>
</dbReference>
<dbReference type="Gene3D" id="3.40.50.10190">
    <property type="entry name" value="BRCT domain"/>
    <property type="match status" value="1"/>
</dbReference>
<dbReference type="Gene3D" id="3.30.470.30">
    <property type="entry name" value="DNA ligase/mRNA capping enzyme"/>
    <property type="match status" value="1"/>
</dbReference>
<dbReference type="Gene3D" id="1.10.287.610">
    <property type="entry name" value="Helix hairpin bin"/>
    <property type="match status" value="1"/>
</dbReference>
<dbReference type="Gene3D" id="2.40.50.140">
    <property type="entry name" value="Nucleic acid-binding proteins"/>
    <property type="match status" value="1"/>
</dbReference>
<dbReference type="HAMAP" id="MF_01588">
    <property type="entry name" value="DNA_ligase_A"/>
    <property type="match status" value="1"/>
</dbReference>
<dbReference type="InterPro" id="IPR001357">
    <property type="entry name" value="BRCT_dom"/>
</dbReference>
<dbReference type="InterPro" id="IPR036420">
    <property type="entry name" value="BRCT_dom_sf"/>
</dbReference>
<dbReference type="InterPro" id="IPR041663">
    <property type="entry name" value="DisA/LigA_HHH"/>
</dbReference>
<dbReference type="InterPro" id="IPR001679">
    <property type="entry name" value="DNA_ligase"/>
</dbReference>
<dbReference type="InterPro" id="IPR013839">
    <property type="entry name" value="DNAligase_adenylation"/>
</dbReference>
<dbReference type="InterPro" id="IPR013840">
    <property type="entry name" value="DNAligase_N"/>
</dbReference>
<dbReference type="InterPro" id="IPR012340">
    <property type="entry name" value="NA-bd_OB-fold"/>
</dbReference>
<dbReference type="InterPro" id="IPR004150">
    <property type="entry name" value="NAD_DNA_ligase_OB"/>
</dbReference>
<dbReference type="InterPro" id="IPR010994">
    <property type="entry name" value="RuvA_2-like"/>
</dbReference>
<dbReference type="InterPro" id="IPR004149">
    <property type="entry name" value="Znf_DNAligase_C4"/>
</dbReference>
<dbReference type="NCBIfam" id="TIGR00575">
    <property type="entry name" value="dnlj"/>
    <property type="match status" value="1"/>
</dbReference>
<dbReference type="NCBIfam" id="NF005932">
    <property type="entry name" value="PRK07956.1"/>
    <property type="match status" value="1"/>
</dbReference>
<dbReference type="PANTHER" id="PTHR23389">
    <property type="entry name" value="CHROMOSOME TRANSMISSION FIDELITY FACTOR 18"/>
    <property type="match status" value="1"/>
</dbReference>
<dbReference type="PANTHER" id="PTHR23389:SF9">
    <property type="entry name" value="DNA LIGASE"/>
    <property type="match status" value="1"/>
</dbReference>
<dbReference type="Pfam" id="PF00533">
    <property type="entry name" value="BRCT"/>
    <property type="match status" value="1"/>
</dbReference>
<dbReference type="Pfam" id="PF01653">
    <property type="entry name" value="DNA_ligase_aden"/>
    <property type="match status" value="1"/>
</dbReference>
<dbReference type="Pfam" id="PF03120">
    <property type="entry name" value="DNA_ligase_OB"/>
    <property type="match status" value="1"/>
</dbReference>
<dbReference type="Pfam" id="PF03119">
    <property type="entry name" value="DNA_ligase_ZBD"/>
    <property type="match status" value="1"/>
</dbReference>
<dbReference type="Pfam" id="PF12826">
    <property type="entry name" value="HHH_2"/>
    <property type="match status" value="1"/>
</dbReference>
<dbReference type="PIRSF" id="PIRSF001604">
    <property type="entry name" value="LigA"/>
    <property type="match status" value="1"/>
</dbReference>
<dbReference type="SMART" id="SM00532">
    <property type="entry name" value="LIGANc"/>
    <property type="match status" value="1"/>
</dbReference>
<dbReference type="SUPFAM" id="SSF52113">
    <property type="entry name" value="BRCT domain"/>
    <property type="match status" value="1"/>
</dbReference>
<dbReference type="SUPFAM" id="SSF56091">
    <property type="entry name" value="DNA ligase/mRNA capping enzyme, catalytic domain"/>
    <property type="match status" value="1"/>
</dbReference>
<dbReference type="SUPFAM" id="SSF50249">
    <property type="entry name" value="Nucleic acid-binding proteins"/>
    <property type="match status" value="1"/>
</dbReference>
<dbReference type="SUPFAM" id="SSF47781">
    <property type="entry name" value="RuvA domain 2-like"/>
    <property type="match status" value="1"/>
</dbReference>
<keyword id="KW-0227">DNA damage</keyword>
<keyword id="KW-0234">DNA repair</keyword>
<keyword id="KW-0235">DNA replication</keyword>
<keyword id="KW-0436">Ligase</keyword>
<keyword id="KW-0460">Magnesium</keyword>
<keyword id="KW-0464">Manganese</keyword>
<keyword id="KW-0479">Metal-binding</keyword>
<keyword id="KW-0520">NAD</keyword>
<keyword id="KW-0862">Zinc</keyword>
<comment type="function">
    <text evidence="1">DNA ligase that catalyzes the formation of phosphodiester linkages between 5'-phosphoryl and 3'-hydroxyl groups in double-stranded DNA using NAD as a coenzyme and as the energy source for the reaction. It is essential for DNA replication and repair of damaged DNA.</text>
</comment>
<comment type="catalytic activity">
    <reaction evidence="1">
        <text>NAD(+) + (deoxyribonucleotide)n-3'-hydroxyl + 5'-phospho-(deoxyribonucleotide)m = (deoxyribonucleotide)n+m + AMP + beta-nicotinamide D-nucleotide.</text>
        <dbReference type="EC" id="6.5.1.2"/>
    </reaction>
</comment>
<comment type="cofactor">
    <cofactor evidence="1">
        <name>Mg(2+)</name>
        <dbReference type="ChEBI" id="CHEBI:18420"/>
    </cofactor>
    <cofactor evidence="1">
        <name>Mn(2+)</name>
        <dbReference type="ChEBI" id="CHEBI:29035"/>
    </cofactor>
</comment>
<comment type="similarity">
    <text evidence="1">Belongs to the NAD-dependent DNA ligase family. LigA subfamily.</text>
</comment>
<feature type="chain" id="PRO_0000380503" description="DNA ligase">
    <location>
        <begin position="1"/>
        <end position="673"/>
    </location>
</feature>
<feature type="domain" description="BRCT" evidence="1">
    <location>
        <begin position="595"/>
        <end position="673"/>
    </location>
</feature>
<feature type="active site" description="N6-AMP-lysine intermediate" evidence="1">
    <location>
        <position position="113"/>
    </location>
</feature>
<feature type="binding site" evidence="1">
    <location>
        <begin position="32"/>
        <end position="36"/>
    </location>
    <ligand>
        <name>NAD(+)</name>
        <dbReference type="ChEBI" id="CHEBI:57540"/>
    </ligand>
</feature>
<feature type="binding site" evidence="1">
    <location>
        <begin position="81"/>
        <end position="82"/>
    </location>
    <ligand>
        <name>NAD(+)</name>
        <dbReference type="ChEBI" id="CHEBI:57540"/>
    </ligand>
</feature>
<feature type="binding site" evidence="1">
    <location>
        <position position="111"/>
    </location>
    <ligand>
        <name>NAD(+)</name>
        <dbReference type="ChEBI" id="CHEBI:57540"/>
    </ligand>
</feature>
<feature type="binding site" evidence="1">
    <location>
        <position position="134"/>
    </location>
    <ligand>
        <name>NAD(+)</name>
        <dbReference type="ChEBI" id="CHEBI:57540"/>
    </ligand>
</feature>
<feature type="binding site" evidence="1">
    <location>
        <position position="171"/>
    </location>
    <ligand>
        <name>NAD(+)</name>
        <dbReference type="ChEBI" id="CHEBI:57540"/>
    </ligand>
</feature>
<feature type="binding site" evidence="1">
    <location>
        <position position="286"/>
    </location>
    <ligand>
        <name>NAD(+)</name>
        <dbReference type="ChEBI" id="CHEBI:57540"/>
    </ligand>
</feature>
<feature type="binding site" evidence="1">
    <location>
        <position position="310"/>
    </location>
    <ligand>
        <name>NAD(+)</name>
        <dbReference type="ChEBI" id="CHEBI:57540"/>
    </ligand>
</feature>
<feature type="binding site" evidence="1">
    <location>
        <position position="404"/>
    </location>
    <ligand>
        <name>Zn(2+)</name>
        <dbReference type="ChEBI" id="CHEBI:29105"/>
    </ligand>
</feature>
<feature type="binding site" evidence="1">
    <location>
        <position position="407"/>
    </location>
    <ligand>
        <name>Zn(2+)</name>
        <dbReference type="ChEBI" id="CHEBI:29105"/>
    </ligand>
</feature>
<feature type="binding site" evidence="1">
    <location>
        <position position="422"/>
    </location>
    <ligand>
        <name>Zn(2+)</name>
        <dbReference type="ChEBI" id="CHEBI:29105"/>
    </ligand>
</feature>
<feature type="binding site" evidence="1">
    <location>
        <position position="428"/>
    </location>
    <ligand>
        <name>Zn(2+)</name>
        <dbReference type="ChEBI" id="CHEBI:29105"/>
    </ligand>
</feature>
<organism>
    <name type="scientific">Ureaplasma urealyticum serovar 10 (strain ATCC 33699 / Western)</name>
    <dbReference type="NCBI Taxonomy" id="565575"/>
    <lineage>
        <taxon>Bacteria</taxon>
        <taxon>Bacillati</taxon>
        <taxon>Mycoplasmatota</taxon>
        <taxon>Mycoplasmoidales</taxon>
        <taxon>Mycoplasmoidaceae</taxon>
        <taxon>Ureaplasma</taxon>
    </lineage>
</organism>
<name>DNLJ_UREU1</name>
<sequence>MDRIKAKINELKQKLDQWNYEYYVLDDPSVPDHVYDQAMRELIELENAYPQFKTNNSPSVRVGGFVSEKFNKVKHKRPMLSLSNAFDANDLRKFDQDNQNASVDLKGYVVEPKIDGLSISIIYKNAKLHQAITRGDGVNGEDVTSNILTIKDIPHYIDQKYKDYEIEVRGEVYMAFHDFYEMNDNLEESDKKFANPRNAAAGTLRSLDNSIVAERKLSAFMYYLVNAQELGIKTHYESIQFLKDNKFKVSDLIVKVDTIDEVINQIDRYTKVRNDLSYMIDGIVIKINNLEVYDEIGYTSKFPKWAIAYKFPANVVSSQLLEIINDVGRTGKISYVAKIKPILLDGSIVEYATLHNFDFIKEKDIRINDEIKIYKAGDVIPYVDGVDLSKRLANSVPYESITNCPSCQSVLVRENDEVDQRCLNIYGCKKINIEKIVYFVSRNCMNIEGMSDAIINKFYDANLIKNVADLYYLQKHKEFILASDFKIKDKSFSNLINSINNSKTRSLEFLLTAFGIRHVGPNLAKKLAKQFKTMTTLMHANFGELTNVDACGEKAALSLINWFNDDHNVSLVNQLQQVGVNMEYIDDFIYDDNINIIDEYKNKTFVITGSFSISRDEIKTILEKYYHAKVKNSVSKKTDYVLAGIEAGTKLEKAKLLGVKIIENEFWKKDNNF</sequence>
<gene>
    <name evidence="1" type="primary">ligA</name>
    <name type="ordered locus">UUR10_0136</name>
</gene>
<accession>B5ZAV3</accession>
<reference key="1">
    <citation type="submission" date="2008-10" db="EMBL/GenBank/DDBJ databases">
        <title>Genome sequence of Ureaplasma urealyticum serovar 10 ATCC-33699.</title>
        <authorList>
            <person name="Shrivastava S."/>
            <person name="Methe B.A."/>
            <person name="Glass J."/>
            <person name="White K."/>
            <person name="Duffy L.B."/>
        </authorList>
    </citation>
    <scope>NUCLEOTIDE SEQUENCE [LARGE SCALE GENOMIC DNA]</scope>
    <source>
        <strain>ATCC 33699 / Western</strain>
    </source>
</reference>
<evidence type="ECO:0000255" key="1">
    <source>
        <dbReference type="HAMAP-Rule" id="MF_01588"/>
    </source>
</evidence>